<accession>A3PY92</accession>
<sequence length="89" mass="10390">MALTAEQKKEILGQYGLHESDTGSPEAQVALLTKRISDLTEHLKQHKHDHHSRRGLLLLVGRRRRLLKYVAQVDVERYRSLIERLGLRR</sequence>
<reference key="1">
    <citation type="submission" date="2007-02" db="EMBL/GenBank/DDBJ databases">
        <title>Complete sequence of Mycobacterium sp. JLS.</title>
        <authorList>
            <consortium name="US DOE Joint Genome Institute"/>
            <person name="Copeland A."/>
            <person name="Lucas S."/>
            <person name="Lapidus A."/>
            <person name="Barry K."/>
            <person name="Detter J.C."/>
            <person name="Glavina del Rio T."/>
            <person name="Hammon N."/>
            <person name="Israni S."/>
            <person name="Dalin E."/>
            <person name="Tice H."/>
            <person name="Pitluck S."/>
            <person name="Chain P."/>
            <person name="Malfatti S."/>
            <person name="Shin M."/>
            <person name="Vergez L."/>
            <person name="Schmutz J."/>
            <person name="Larimer F."/>
            <person name="Land M."/>
            <person name="Hauser L."/>
            <person name="Kyrpides N."/>
            <person name="Mikhailova N."/>
            <person name="Miller C.D."/>
            <person name="Anderson A.J."/>
            <person name="Sims R.C."/>
            <person name="Richardson P."/>
        </authorList>
    </citation>
    <scope>NUCLEOTIDE SEQUENCE [LARGE SCALE GENOMIC DNA]</scope>
    <source>
        <strain>JLS</strain>
    </source>
</reference>
<proteinExistence type="inferred from homology"/>
<comment type="function">
    <text evidence="1">One of the primary rRNA binding proteins, it binds directly to 16S rRNA where it helps nucleate assembly of the platform of the 30S subunit by binding and bridging several RNA helices of the 16S rRNA.</text>
</comment>
<comment type="function">
    <text evidence="1">Forms an intersubunit bridge (bridge B4) with the 23S rRNA of the 50S subunit in the ribosome.</text>
</comment>
<comment type="subunit">
    <text evidence="1">Part of the 30S ribosomal subunit. Forms a bridge to the 50S subunit in the 70S ribosome, contacting the 23S rRNA.</text>
</comment>
<comment type="similarity">
    <text evidence="1">Belongs to the universal ribosomal protein uS15 family.</text>
</comment>
<feature type="chain" id="PRO_1000054820" description="Small ribosomal subunit protein uS15">
    <location>
        <begin position="1"/>
        <end position="89"/>
    </location>
</feature>
<protein>
    <recommendedName>
        <fullName evidence="1">Small ribosomal subunit protein uS15</fullName>
    </recommendedName>
    <alternativeName>
        <fullName evidence="2">30S ribosomal protein S15</fullName>
    </alternativeName>
</protein>
<keyword id="KW-0687">Ribonucleoprotein</keyword>
<keyword id="KW-0689">Ribosomal protein</keyword>
<keyword id="KW-0694">RNA-binding</keyword>
<keyword id="KW-0699">rRNA-binding</keyword>
<gene>
    <name evidence="1" type="primary">rpsO</name>
    <name type="ordered locus">Mjls_2082</name>
</gene>
<dbReference type="EMBL" id="CP000580">
    <property type="protein sequence ID" value="ABN97869.1"/>
    <property type="molecule type" value="Genomic_DNA"/>
</dbReference>
<dbReference type="SMR" id="A3PY92"/>
<dbReference type="KEGG" id="mjl:Mjls_2082"/>
<dbReference type="HOGENOM" id="CLU_148518_0_0_11"/>
<dbReference type="BioCyc" id="MSP164757:G1G8C-2101-MONOMER"/>
<dbReference type="GO" id="GO:0022627">
    <property type="term" value="C:cytosolic small ribosomal subunit"/>
    <property type="evidence" value="ECO:0007669"/>
    <property type="project" value="TreeGrafter"/>
</dbReference>
<dbReference type="GO" id="GO:0019843">
    <property type="term" value="F:rRNA binding"/>
    <property type="evidence" value="ECO:0007669"/>
    <property type="project" value="UniProtKB-UniRule"/>
</dbReference>
<dbReference type="GO" id="GO:0003735">
    <property type="term" value="F:structural constituent of ribosome"/>
    <property type="evidence" value="ECO:0007669"/>
    <property type="project" value="InterPro"/>
</dbReference>
<dbReference type="GO" id="GO:0006412">
    <property type="term" value="P:translation"/>
    <property type="evidence" value="ECO:0007669"/>
    <property type="project" value="UniProtKB-UniRule"/>
</dbReference>
<dbReference type="CDD" id="cd00353">
    <property type="entry name" value="Ribosomal_S15p_S13e"/>
    <property type="match status" value="1"/>
</dbReference>
<dbReference type="FunFam" id="1.10.287.10:FF:000002">
    <property type="entry name" value="30S ribosomal protein S15"/>
    <property type="match status" value="1"/>
</dbReference>
<dbReference type="Gene3D" id="6.10.250.3130">
    <property type="match status" value="1"/>
</dbReference>
<dbReference type="Gene3D" id="1.10.287.10">
    <property type="entry name" value="S15/NS1, RNA-binding"/>
    <property type="match status" value="1"/>
</dbReference>
<dbReference type="HAMAP" id="MF_01343_B">
    <property type="entry name" value="Ribosomal_uS15_B"/>
    <property type="match status" value="1"/>
</dbReference>
<dbReference type="InterPro" id="IPR000589">
    <property type="entry name" value="Ribosomal_uS15"/>
</dbReference>
<dbReference type="InterPro" id="IPR005290">
    <property type="entry name" value="Ribosomal_uS15_bac-type"/>
</dbReference>
<dbReference type="InterPro" id="IPR009068">
    <property type="entry name" value="uS15_NS1_RNA-bd_sf"/>
</dbReference>
<dbReference type="NCBIfam" id="TIGR00952">
    <property type="entry name" value="S15_bact"/>
    <property type="match status" value="1"/>
</dbReference>
<dbReference type="PANTHER" id="PTHR23321">
    <property type="entry name" value="RIBOSOMAL PROTEIN S15, BACTERIAL AND ORGANELLAR"/>
    <property type="match status" value="1"/>
</dbReference>
<dbReference type="PANTHER" id="PTHR23321:SF26">
    <property type="entry name" value="SMALL RIBOSOMAL SUBUNIT PROTEIN US15M"/>
    <property type="match status" value="1"/>
</dbReference>
<dbReference type="Pfam" id="PF00312">
    <property type="entry name" value="Ribosomal_S15"/>
    <property type="match status" value="1"/>
</dbReference>
<dbReference type="SMART" id="SM01387">
    <property type="entry name" value="Ribosomal_S15"/>
    <property type="match status" value="1"/>
</dbReference>
<dbReference type="SUPFAM" id="SSF47060">
    <property type="entry name" value="S15/NS1 RNA-binding domain"/>
    <property type="match status" value="1"/>
</dbReference>
<dbReference type="PROSITE" id="PS00362">
    <property type="entry name" value="RIBOSOMAL_S15"/>
    <property type="match status" value="1"/>
</dbReference>
<evidence type="ECO:0000255" key="1">
    <source>
        <dbReference type="HAMAP-Rule" id="MF_01343"/>
    </source>
</evidence>
<evidence type="ECO:0000305" key="2"/>
<organism>
    <name type="scientific">Mycobacterium sp. (strain JLS)</name>
    <dbReference type="NCBI Taxonomy" id="164757"/>
    <lineage>
        <taxon>Bacteria</taxon>
        <taxon>Bacillati</taxon>
        <taxon>Actinomycetota</taxon>
        <taxon>Actinomycetes</taxon>
        <taxon>Mycobacteriales</taxon>
        <taxon>Mycobacteriaceae</taxon>
        <taxon>Mycobacterium</taxon>
    </lineage>
</organism>
<name>RS15_MYCSJ</name>